<organism>
    <name type="scientific">Bacillus cereus (strain ATCC 14579 / DSM 31 / CCUG 7414 / JCM 2152 / NBRC 15305 / NCIMB 9373 / NCTC 2599 / NRRL B-3711)</name>
    <dbReference type="NCBI Taxonomy" id="226900"/>
    <lineage>
        <taxon>Bacteria</taxon>
        <taxon>Bacillati</taxon>
        <taxon>Bacillota</taxon>
        <taxon>Bacilli</taxon>
        <taxon>Bacillales</taxon>
        <taxon>Bacillaceae</taxon>
        <taxon>Bacillus</taxon>
        <taxon>Bacillus cereus group</taxon>
    </lineage>
</organism>
<accession>Q819E8</accession>
<proteinExistence type="evidence at protein level"/>
<name>MTNW_BACCR</name>
<feature type="chain" id="PRO_0000062689" description="2,3-diketo-5-methylthiopentyl-1-phosphate enolase">
    <location>
        <begin position="1"/>
        <end position="414"/>
    </location>
</feature>
<feature type="active site" description="Proton acceptor" evidence="1">
    <location>
        <position position="99"/>
    </location>
</feature>
<feature type="binding site" evidence="1">
    <location>
        <position position="148"/>
    </location>
    <ligand>
        <name>substrate</name>
    </ligand>
</feature>
<feature type="binding site" evidence="1">
    <location>
        <begin position="174"/>
        <end position="177"/>
    </location>
    <ligand>
        <name>substrate</name>
    </ligand>
</feature>
<feature type="binding site" description="via carbamate group" evidence="1">
    <location>
        <position position="174"/>
    </location>
    <ligand>
        <name>Mg(2+)</name>
        <dbReference type="ChEBI" id="CHEBI:18420"/>
    </ligand>
</feature>
<feature type="binding site" evidence="1">
    <location>
        <position position="176"/>
    </location>
    <ligand>
        <name>Mg(2+)</name>
        <dbReference type="ChEBI" id="CHEBI:18420"/>
    </ligand>
</feature>
<feature type="binding site" evidence="1">
    <location>
        <position position="177"/>
    </location>
    <ligand>
        <name>Mg(2+)</name>
        <dbReference type="ChEBI" id="CHEBI:18420"/>
    </ligand>
</feature>
<feature type="binding site" evidence="1">
    <location>
        <position position="265"/>
    </location>
    <ligand>
        <name>substrate</name>
    </ligand>
</feature>
<feature type="binding site" evidence="1">
    <location>
        <position position="338"/>
    </location>
    <ligand>
        <name>substrate</name>
    </ligand>
</feature>
<feature type="binding site" evidence="1">
    <location>
        <begin position="360"/>
        <end position="361"/>
    </location>
    <ligand>
        <name>substrate</name>
    </ligand>
</feature>
<feature type="modified residue" description="N6-carboxylysine" evidence="1">
    <location>
        <position position="174"/>
    </location>
</feature>
<feature type="strand" evidence="2">
    <location>
        <begin position="4"/>
        <end position="12"/>
    </location>
</feature>
<feature type="helix" evidence="2">
    <location>
        <begin position="17"/>
        <end position="27"/>
    </location>
</feature>
<feature type="turn" evidence="2">
    <location>
        <begin position="28"/>
        <end position="30"/>
    </location>
</feature>
<feature type="helix" evidence="2">
    <location>
        <begin position="38"/>
        <end position="41"/>
    </location>
</feature>
<feature type="helix" evidence="2">
    <location>
        <begin position="45"/>
        <end position="47"/>
    </location>
</feature>
<feature type="strand" evidence="2">
    <location>
        <begin position="50"/>
        <end position="56"/>
    </location>
</feature>
<feature type="helix" evidence="2">
    <location>
        <begin position="61"/>
        <end position="67"/>
    </location>
</feature>
<feature type="strand" evidence="2">
    <location>
        <begin position="72"/>
        <end position="80"/>
    </location>
</feature>
<feature type="helix" evidence="2">
    <location>
        <begin position="82"/>
        <end position="84"/>
    </location>
</feature>
<feature type="helix" evidence="2">
    <location>
        <begin position="89"/>
        <end position="97"/>
    </location>
</feature>
<feature type="helix" evidence="2">
    <location>
        <begin position="100"/>
        <end position="102"/>
    </location>
</feature>
<feature type="strand" evidence="2">
    <location>
        <begin position="103"/>
        <end position="113"/>
    </location>
</feature>
<feature type="helix" evidence="2">
    <location>
        <begin position="115"/>
        <end position="118"/>
    </location>
</feature>
<feature type="helix" evidence="2">
    <location>
        <begin position="127"/>
        <end position="135"/>
    </location>
</feature>
<feature type="strand" evidence="2">
    <location>
        <begin position="142"/>
        <end position="146"/>
    </location>
</feature>
<feature type="helix" evidence="2">
    <location>
        <begin position="155"/>
        <end position="167"/>
    </location>
</feature>
<feature type="strand" evidence="2">
    <location>
        <begin position="171"/>
        <end position="174"/>
    </location>
</feature>
<feature type="strand" evidence="2">
    <location>
        <begin position="183"/>
        <end position="185"/>
    </location>
</feature>
<feature type="helix" evidence="2">
    <location>
        <begin position="187"/>
        <end position="205"/>
    </location>
</feature>
<feature type="strand" evidence="2">
    <location>
        <begin position="210"/>
        <end position="214"/>
    </location>
</feature>
<feature type="helix" evidence="2">
    <location>
        <begin position="219"/>
        <end position="221"/>
    </location>
</feature>
<feature type="helix" evidence="2">
    <location>
        <begin position="222"/>
        <end position="232"/>
    </location>
</feature>
<feature type="strand" evidence="2">
    <location>
        <begin position="235"/>
        <end position="239"/>
    </location>
</feature>
<feature type="helix" evidence="2">
    <location>
        <begin position="241"/>
        <end position="244"/>
    </location>
</feature>
<feature type="helix" evidence="2">
    <location>
        <begin position="246"/>
        <end position="254"/>
    </location>
</feature>
<feature type="strand" evidence="2">
    <location>
        <begin position="262"/>
        <end position="264"/>
    </location>
</feature>
<feature type="turn" evidence="2">
    <location>
        <begin position="267"/>
        <end position="269"/>
    </location>
</feature>
<feature type="helix" evidence="2">
    <location>
        <begin position="270"/>
        <end position="273"/>
    </location>
</feature>
<feature type="strand" evidence="2">
    <location>
        <begin position="276"/>
        <end position="280"/>
    </location>
</feature>
<feature type="helix" evidence="2">
    <location>
        <begin position="282"/>
        <end position="286"/>
    </location>
</feature>
<feature type="helix" evidence="2">
    <location>
        <begin position="288"/>
        <end position="293"/>
    </location>
</feature>
<feature type="strand" evidence="2">
    <location>
        <begin position="296"/>
        <end position="301"/>
    </location>
</feature>
<feature type="helix" evidence="2">
    <location>
        <begin position="312"/>
        <end position="322"/>
    </location>
</feature>
<feature type="strand" evidence="2">
    <location>
        <begin position="332"/>
        <end position="338"/>
    </location>
</feature>
<feature type="helix" evidence="2">
    <location>
        <begin position="341"/>
        <end position="343"/>
    </location>
</feature>
<feature type="helix" evidence="2">
    <location>
        <begin position="344"/>
        <end position="351"/>
    </location>
</feature>
<feature type="strand" evidence="2">
    <location>
        <begin position="353"/>
        <end position="358"/>
    </location>
</feature>
<feature type="helix" evidence="2">
    <location>
        <begin position="360"/>
        <end position="365"/>
    </location>
</feature>
<feature type="helix" evidence="2">
    <location>
        <begin position="369"/>
        <end position="385"/>
    </location>
</feature>
<feature type="helix" evidence="2">
    <location>
        <begin position="396"/>
        <end position="404"/>
    </location>
</feature>
<gene>
    <name evidence="1" type="primary">mtnW</name>
    <name type="ordered locus">BC_4036</name>
</gene>
<keyword id="KW-0002">3D-structure</keyword>
<keyword id="KW-0028">Amino-acid biosynthesis</keyword>
<keyword id="KW-0413">Isomerase</keyword>
<keyword id="KW-0460">Magnesium</keyword>
<keyword id="KW-0479">Metal-binding</keyword>
<keyword id="KW-0486">Methionine biosynthesis</keyword>
<keyword id="KW-1185">Reference proteome</keyword>
<dbReference type="EC" id="5.3.2.5" evidence="1"/>
<dbReference type="EMBL" id="AE016877">
    <property type="protein sequence ID" value="AAP10955.1"/>
    <property type="molecule type" value="Genomic_DNA"/>
</dbReference>
<dbReference type="RefSeq" id="NP_833754.1">
    <property type="nucleotide sequence ID" value="NC_004722.1"/>
</dbReference>
<dbReference type="RefSeq" id="WP_000014181.1">
    <property type="nucleotide sequence ID" value="NZ_CP138336.1"/>
</dbReference>
<dbReference type="PDB" id="3FK4">
    <property type="method" value="X-ray"/>
    <property type="resolution" value="2.00 A"/>
    <property type="chains" value="A/B=1-414"/>
</dbReference>
<dbReference type="PDBsum" id="3FK4"/>
<dbReference type="SMR" id="Q819E8"/>
<dbReference type="STRING" id="226900.BC_4036"/>
<dbReference type="KEGG" id="bce:BC4036"/>
<dbReference type="PATRIC" id="fig|226900.8.peg.4167"/>
<dbReference type="HOGENOM" id="CLU_031450_3_1_9"/>
<dbReference type="OrthoDB" id="9770811at2"/>
<dbReference type="UniPathway" id="UPA00904">
    <property type="reaction ID" value="UER00876"/>
</dbReference>
<dbReference type="EvolutionaryTrace" id="Q819E8"/>
<dbReference type="Proteomes" id="UP000001417">
    <property type="component" value="Chromosome"/>
</dbReference>
<dbReference type="GO" id="GO:0043715">
    <property type="term" value="F:2,3-diketo-5-methylthiopentyl-1-phosphate enolase activity"/>
    <property type="evidence" value="ECO:0007669"/>
    <property type="project" value="UniProtKB-UniRule"/>
</dbReference>
<dbReference type="GO" id="GO:0000287">
    <property type="term" value="F:magnesium ion binding"/>
    <property type="evidence" value="ECO:0007669"/>
    <property type="project" value="UniProtKB-UniRule"/>
</dbReference>
<dbReference type="GO" id="GO:0016984">
    <property type="term" value="F:ribulose-bisphosphate carboxylase activity"/>
    <property type="evidence" value="ECO:0007669"/>
    <property type="project" value="InterPro"/>
</dbReference>
<dbReference type="GO" id="GO:0015977">
    <property type="term" value="P:carbon fixation"/>
    <property type="evidence" value="ECO:0007669"/>
    <property type="project" value="InterPro"/>
</dbReference>
<dbReference type="GO" id="GO:0019509">
    <property type="term" value="P:L-methionine salvage from methylthioadenosine"/>
    <property type="evidence" value="ECO:0007669"/>
    <property type="project" value="UniProtKB-UniRule"/>
</dbReference>
<dbReference type="CDD" id="cd08209">
    <property type="entry name" value="RLP_DK-MTP-1-P-enolase"/>
    <property type="match status" value="1"/>
</dbReference>
<dbReference type="FunFam" id="3.20.20.110:FF:000002">
    <property type="entry name" value="2,3-diketo-5-methylthiopentyl-1-phosphate enolase"/>
    <property type="match status" value="1"/>
</dbReference>
<dbReference type="Gene3D" id="3.20.20.110">
    <property type="entry name" value="Ribulose bisphosphate carboxylase, large subunit, C-terminal domain"/>
    <property type="match status" value="1"/>
</dbReference>
<dbReference type="Gene3D" id="3.30.70.150">
    <property type="entry name" value="RuBisCO large subunit, N-terminal domain"/>
    <property type="match status" value="1"/>
</dbReference>
<dbReference type="HAMAP" id="MF_01679">
    <property type="entry name" value="Salvage_MtnW"/>
    <property type="match status" value="1"/>
</dbReference>
<dbReference type="InterPro" id="IPR017717">
    <property type="entry name" value="Diketo-Methiopentyl-P_enolase"/>
</dbReference>
<dbReference type="InterPro" id="IPR033966">
    <property type="entry name" value="RuBisCO"/>
</dbReference>
<dbReference type="InterPro" id="IPR000685">
    <property type="entry name" value="RuBisCO_lsu_C"/>
</dbReference>
<dbReference type="InterPro" id="IPR036376">
    <property type="entry name" value="RuBisCO_lsu_C_sf"/>
</dbReference>
<dbReference type="InterPro" id="IPR017443">
    <property type="entry name" value="RuBisCO_lsu_fd_N"/>
</dbReference>
<dbReference type="InterPro" id="IPR036422">
    <property type="entry name" value="RuBisCO_lsu_N_sf"/>
</dbReference>
<dbReference type="NCBIfam" id="NF007095">
    <property type="entry name" value="PRK09549.1"/>
    <property type="match status" value="1"/>
</dbReference>
<dbReference type="NCBIfam" id="TIGR03332">
    <property type="entry name" value="salvage_mtnW"/>
    <property type="match status" value="1"/>
</dbReference>
<dbReference type="PANTHER" id="PTHR42704">
    <property type="entry name" value="RIBULOSE BISPHOSPHATE CARBOXYLASE"/>
    <property type="match status" value="1"/>
</dbReference>
<dbReference type="PANTHER" id="PTHR42704:SF17">
    <property type="entry name" value="RIBULOSE BISPHOSPHATE CARBOXYLASE LARGE CHAIN"/>
    <property type="match status" value="1"/>
</dbReference>
<dbReference type="Pfam" id="PF00016">
    <property type="entry name" value="RuBisCO_large"/>
    <property type="match status" value="1"/>
</dbReference>
<dbReference type="Pfam" id="PF02788">
    <property type="entry name" value="RuBisCO_large_N"/>
    <property type="match status" value="1"/>
</dbReference>
<dbReference type="SFLD" id="SFLDF00157">
    <property type="entry name" value="2_3-diketo-5-methylthiopentyl"/>
    <property type="match status" value="1"/>
</dbReference>
<dbReference type="SFLD" id="SFLDS00014">
    <property type="entry name" value="RuBisCO"/>
    <property type="match status" value="1"/>
</dbReference>
<dbReference type="SUPFAM" id="SSF51649">
    <property type="entry name" value="RuBisCo, C-terminal domain"/>
    <property type="match status" value="1"/>
</dbReference>
<dbReference type="SUPFAM" id="SSF54966">
    <property type="entry name" value="RuBisCO, large subunit, small (N-terminal) domain"/>
    <property type="match status" value="1"/>
</dbReference>
<protein>
    <recommendedName>
        <fullName evidence="1">2,3-diketo-5-methylthiopentyl-1-phosphate enolase</fullName>
        <shortName evidence="1">DK-MTP-1-P enolase</shortName>
        <ecNumber evidence="1">5.3.2.5</ecNumber>
    </recommendedName>
    <alternativeName>
        <fullName evidence="1">RuBisCO-like protein</fullName>
        <shortName evidence="1">RLP</shortName>
    </alternativeName>
</protein>
<evidence type="ECO:0000255" key="1">
    <source>
        <dbReference type="HAMAP-Rule" id="MF_01679"/>
    </source>
</evidence>
<evidence type="ECO:0007829" key="2">
    <source>
        <dbReference type="PDB" id="3FK4"/>
    </source>
</evidence>
<sequence>MSGIIATYLIHDDSHNLEKKAEQIALGLTIGSWTHLPHLLQEQLKQHKGNVIHVEELAEHEHTNSYLRKKVKRGIIKIEYPLLNFSPDLPAILTTTFGKLSLDGEVKLIDLTFSDELKKHFPGPKFGIDGIRNLLQVHDRPLLMSIFKGMIGRNIGYLKTQLRDQAIGGVDIVKDDEILFENALTPLTKRIVSGKEVLQSVYETYGHKTLYAVNLTGRTFDLKENAKRAVQAGADILLFNVFAYGLDVLQSLAEDDEIPVPIMAHPAVSGAYSASKLYGVSSPLLLGKLLRYAGADFSLFPSPYGSVALEKEEALAISKYLTEDDASFKKSFSVPSAGIHPGFVPFIVRDFGKDVVINAGGGIHGHPNGAQGGGKAFRTAIDATLQNKPLHEVDDINLHSALQIWGNPSYEVKL</sequence>
<reference key="1">
    <citation type="journal article" date="2003" name="Nature">
        <title>Genome sequence of Bacillus cereus and comparative analysis with Bacillus anthracis.</title>
        <authorList>
            <person name="Ivanova N."/>
            <person name="Sorokin A."/>
            <person name="Anderson I."/>
            <person name="Galleron N."/>
            <person name="Candelon B."/>
            <person name="Kapatral V."/>
            <person name="Bhattacharyya A."/>
            <person name="Reznik G."/>
            <person name="Mikhailova N."/>
            <person name="Lapidus A."/>
            <person name="Chu L."/>
            <person name="Mazur M."/>
            <person name="Goltsman E."/>
            <person name="Larsen N."/>
            <person name="D'Souza M."/>
            <person name="Walunas T."/>
            <person name="Grechkin Y."/>
            <person name="Pusch G."/>
            <person name="Haselkorn R."/>
            <person name="Fonstein M."/>
            <person name="Ehrlich S.D."/>
            <person name="Overbeek R."/>
            <person name="Kyrpides N.C."/>
        </authorList>
    </citation>
    <scope>NUCLEOTIDE SEQUENCE [LARGE SCALE GENOMIC DNA]</scope>
    <source>
        <strain>ATCC 14579 / DSM 31 / CCUG 7414 / JCM 2152 / NBRC 15305 / NCIMB 9373 / NCTC 2599 / NRRL B-3711</strain>
    </source>
</reference>
<comment type="function">
    <text evidence="1">Catalyzes the enolization of 2,3-diketo-5-methylthiopentyl-1-phosphate (DK-MTP-1-P) into 2-hydroxy-3-keto-5-methylthiopentenyl-1-phosphate (HK-MTPenyl-1-P).</text>
</comment>
<comment type="catalytic activity">
    <reaction evidence="1">
        <text>5-methylsulfanyl-2,3-dioxopentyl phosphate = 2-hydroxy-5-methylsulfanyl-3-oxopent-1-enyl phosphate</text>
        <dbReference type="Rhea" id="RHEA:18769"/>
        <dbReference type="ChEBI" id="CHEBI:58828"/>
        <dbReference type="ChEBI" id="CHEBI:59505"/>
        <dbReference type="EC" id="5.3.2.5"/>
    </reaction>
</comment>
<comment type="cofactor">
    <cofactor evidence="1">
        <name>Mg(2+)</name>
        <dbReference type="ChEBI" id="CHEBI:18420"/>
    </cofactor>
    <text evidence="1">Binds 1 Mg(2+) ion per subunit.</text>
</comment>
<comment type="pathway">
    <text evidence="1">Amino-acid biosynthesis; L-methionine biosynthesis via salvage pathway; L-methionine from S-methyl-5-thio-alpha-D-ribose 1-phosphate: step 3/6.</text>
</comment>
<comment type="subunit">
    <text evidence="1">Homodimer.</text>
</comment>
<comment type="miscellaneous">
    <text evidence="1">Has no RuBP-carboxylation activity.</text>
</comment>
<comment type="similarity">
    <text evidence="1">Belongs to the RuBisCO large chain family. Type IV subfamily.</text>
</comment>